<dbReference type="EC" id="6.3.2.8" evidence="1"/>
<dbReference type="EMBL" id="CP000419">
    <property type="protein sequence ID" value="ABJ65596.1"/>
    <property type="molecule type" value="Genomic_DNA"/>
</dbReference>
<dbReference type="RefSeq" id="WP_011680706.1">
    <property type="nucleotide sequence ID" value="NC_008532.1"/>
</dbReference>
<dbReference type="SMR" id="Q03MH6"/>
<dbReference type="KEGG" id="ste:STER_0286"/>
<dbReference type="HOGENOM" id="CLU_028104_1_0_9"/>
<dbReference type="UniPathway" id="UPA00219"/>
<dbReference type="GO" id="GO:0005737">
    <property type="term" value="C:cytoplasm"/>
    <property type="evidence" value="ECO:0007669"/>
    <property type="project" value="UniProtKB-SubCell"/>
</dbReference>
<dbReference type="GO" id="GO:0005524">
    <property type="term" value="F:ATP binding"/>
    <property type="evidence" value="ECO:0007669"/>
    <property type="project" value="UniProtKB-UniRule"/>
</dbReference>
<dbReference type="GO" id="GO:0008763">
    <property type="term" value="F:UDP-N-acetylmuramate-L-alanine ligase activity"/>
    <property type="evidence" value="ECO:0007669"/>
    <property type="project" value="UniProtKB-UniRule"/>
</dbReference>
<dbReference type="GO" id="GO:0051301">
    <property type="term" value="P:cell division"/>
    <property type="evidence" value="ECO:0007669"/>
    <property type="project" value="UniProtKB-KW"/>
</dbReference>
<dbReference type="GO" id="GO:0071555">
    <property type="term" value="P:cell wall organization"/>
    <property type="evidence" value="ECO:0007669"/>
    <property type="project" value="UniProtKB-KW"/>
</dbReference>
<dbReference type="GO" id="GO:0009252">
    <property type="term" value="P:peptidoglycan biosynthetic process"/>
    <property type="evidence" value="ECO:0007669"/>
    <property type="project" value="UniProtKB-UniRule"/>
</dbReference>
<dbReference type="GO" id="GO:0008360">
    <property type="term" value="P:regulation of cell shape"/>
    <property type="evidence" value="ECO:0007669"/>
    <property type="project" value="UniProtKB-KW"/>
</dbReference>
<dbReference type="Gene3D" id="3.90.190.20">
    <property type="entry name" value="Mur ligase, C-terminal domain"/>
    <property type="match status" value="1"/>
</dbReference>
<dbReference type="Gene3D" id="3.40.1190.10">
    <property type="entry name" value="Mur-like, catalytic domain"/>
    <property type="match status" value="1"/>
</dbReference>
<dbReference type="Gene3D" id="3.40.50.720">
    <property type="entry name" value="NAD(P)-binding Rossmann-like Domain"/>
    <property type="match status" value="1"/>
</dbReference>
<dbReference type="HAMAP" id="MF_00046">
    <property type="entry name" value="MurC"/>
    <property type="match status" value="1"/>
</dbReference>
<dbReference type="InterPro" id="IPR036565">
    <property type="entry name" value="Mur-like_cat_sf"/>
</dbReference>
<dbReference type="InterPro" id="IPR004101">
    <property type="entry name" value="Mur_ligase_C"/>
</dbReference>
<dbReference type="InterPro" id="IPR036615">
    <property type="entry name" value="Mur_ligase_C_dom_sf"/>
</dbReference>
<dbReference type="InterPro" id="IPR013221">
    <property type="entry name" value="Mur_ligase_cen"/>
</dbReference>
<dbReference type="InterPro" id="IPR000713">
    <property type="entry name" value="Mur_ligase_N"/>
</dbReference>
<dbReference type="InterPro" id="IPR050061">
    <property type="entry name" value="MurCDEF_pg_biosynth"/>
</dbReference>
<dbReference type="InterPro" id="IPR005758">
    <property type="entry name" value="UDP-N-AcMur_Ala_ligase_MurC"/>
</dbReference>
<dbReference type="NCBIfam" id="TIGR01082">
    <property type="entry name" value="murC"/>
    <property type="match status" value="1"/>
</dbReference>
<dbReference type="PANTHER" id="PTHR43445:SF3">
    <property type="entry name" value="UDP-N-ACETYLMURAMATE--L-ALANINE LIGASE"/>
    <property type="match status" value="1"/>
</dbReference>
<dbReference type="PANTHER" id="PTHR43445">
    <property type="entry name" value="UDP-N-ACETYLMURAMATE--L-ALANINE LIGASE-RELATED"/>
    <property type="match status" value="1"/>
</dbReference>
<dbReference type="Pfam" id="PF01225">
    <property type="entry name" value="Mur_ligase"/>
    <property type="match status" value="1"/>
</dbReference>
<dbReference type="Pfam" id="PF02875">
    <property type="entry name" value="Mur_ligase_C"/>
    <property type="match status" value="1"/>
</dbReference>
<dbReference type="Pfam" id="PF08245">
    <property type="entry name" value="Mur_ligase_M"/>
    <property type="match status" value="1"/>
</dbReference>
<dbReference type="SUPFAM" id="SSF51984">
    <property type="entry name" value="MurCD N-terminal domain"/>
    <property type="match status" value="1"/>
</dbReference>
<dbReference type="SUPFAM" id="SSF53623">
    <property type="entry name" value="MurD-like peptide ligases, catalytic domain"/>
    <property type="match status" value="1"/>
</dbReference>
<dbReference type="SUPFAM" id="SSF53244">
    <property type="entry name" value="MurD-like peptide ligases, peptide-binding domain"/>
    <property type="match status" value="1"/>
</dbReference>
<accession>Q03MH6</accession>
<reference key="1">
    <citation type="journal article" date="2006" name="Proc. Natl. Acad. Sci. U.S.A.">
        <title>Comparative genomics of the lactic acid bacteria.</title>
        <authorList>
            <person name="Makarova K.S."/>
            <person name="Slesarev A."/>
            <person name="Wolf Y.I."/>
            <person name="Sorokin A."/>
            <person name="Mirkin B."/>
            <person name="Koonin E.V."/>
            <person name="Pavlov A."/>
            <person name="Pavlova N."/>
            <person name="Karamychev V."/>
            <person name="Polouchine N."/>
            <person name="Shakhova V."/>
            <person name="Grigoriev I."/>
            <person name="Lou Y."/>
            <person name="Rohksar D."/>
            <person name="Lucas S."/>
            <person name="Huang K."/>
            <person name="Goodstein D.M."/>
            <person name="Hawkins T."/>
            <person name="Plengvidhya V."/>
            <person name="Welker D."/>
            <person name="Hughes J."/>
            <person name="Goh Y."/>
            <person name="Benson A."/>
            <person name="Baldwin K."/>
            <person name="Lee J.-H."/>
            <person name="Diaz-Muniz I."/>
            <person name="Dosti B."/>
            <person name="Smeianov V."/>
            <person name="Wechter W."/>
            <person name="Barabote R."/>
            <person name="Lorca G."/>
            <person name="Altermann E."/>
            <person name="Barrangou R."/>
            <person name="Ganesan B."/>
            <person name="Xie Y."/>
            <person name="Rawsthorne H."/>
            <person name="Tamir D."/>
            <person name="Parker C."/>
            <person name="Breidt F."/>
            <person name="Broadbent J.R."/>
            <person name="Hutkins R."/>
            <person name="O'Sullivan D."/>
            <person name="Steele J."/>
            <person name="Unlu G."/>
            <person name="Saier M.H. Jr."/>
            <person name="Klaenhammer T."/>
            <person name="Richardson P."/>
            <person name="Kozyavkin S."/>
            <person name="Weimer B.C."/>
            <person name="Mills D.A."/>
        </authorList>
    </citation>
    <scope>NUCLEOTIDE SEQUENCE [LARGE SCALE GENOMIC DNA]</scope>
    <source>
        <strain>ATCC BAA-491 / LMD-9</strain>
    </source>
</reference>
<feature type="chain" id="PRO_1000004429" description="UDP-N-acetylmuramate--L-alanine ligase">
    <location>
        <begin position="1"/>
        <end position="442"/>
    </location>
</feature>
<feature type="binding site" evidence="1">
    <location>
        <begin position="110"/>
        <end position="116"/>
    </location>
    <ligand>
        <name>ATP</name>
        <dbReference type="ChEBI" id="CHEBI:30616"/>
    </ligand>
</feature>
<gene>
    <name evidence="1" type="primary">murC</name>
    <name type="ordered locus">STER_0286</name>
</gene>
<comment type="function">
    <text evidence="1">Cell wall formation.</text>
</comment>
<comment type="catalytic activity">
    <reaction evidence="1">
        <text>UDP-N-acetyl-alpha-D-muramate + L-alanine + ATP = UDP-N-acetyl-alpha-D-muramoyl-L-alanine + ADP + phosphate + H(+)</text>
        <dbReference type="Rhea" id="RHEA:23372"/>
        <dbReference type="ChEBI" id="CHEBI:15378"/>
        <dbReference type="ChEBI" id="CHEBI:30616"/>
        <dbReference type="ChEBI" id="CHEBI:43474"/>
        <dbReference type="ChEBI" id="CHEBI:57972"/>
        <dbReference type="ChEBI" id="CHEBI:70757"/>
        <dbReference type="ChEBI" id="CHEBI:83898"/>
        <dbReference type="ChEBI" id="CHEBI:456216"/>
        <dbReference type="EC" id="6.3.2.8"/>
    </reaction>
</comment>
<comment type="pathway">
    <text evidence="1">Cell wall biogenesis; peptidoglycan biosynthesis.</text>
</comment>
<comment type="subcellular location">
    <subcellularLocation>
        <location evidence="1">Cytoplasm</location>
    </subcellularLocation>
</comment>
<comment type="similarity">
    <text evidence="1">Belongs to the MurCDEF family.</text>
</comment>
<sequence length="442" mass="49644">MSKTYHFIGIKGSGMSALALMLHQMGYKVQGSDVEKYYFTQRGLEQAGIPILPFDEKNITEDVELIAGNAFREDNNVEIAYAIKNGYKFKRYHEFLGHFMNQFTSFGVAGAHGKTSTTGLLSHSMKNITDTSYLIGDGTGRGSANAQYFVFEADEYERHFMPYHPAYSIITNIDFDHPDYFTSIDDVFSAFDDYAKQVQKGLFVYGEDSNLRKITSNAPIYYYGFEENDDFMATDIIRTTTGSNFKVKHDGQIIGEFHVPAYGRHNILNATAVIANLYVAGFDMALVAEHLKTFSGVKRRFTEKIISDTVIIDDFAHHPTEIIATLDAARQKYPSKEIVAIFQPHTFTRTIALLDDFAEALNEADAVYLAQIYGSAREVDHGDVKVEDLAAKINKPAKVVTVENVSPLLDHDNAIYVFMGAGDIQLYERSFEELLASLQTHM</sequence>
<name>MURC_STRTD</name>
<evidence type="ECO:0000255" key="1">
    <source>
        <dbReference type="HAMAP-Rule" id="MF_00046"/>
    </source>
</evidence>
<protein>
    <recommendedName>
        <fullName evidence="1">UDP-N-acetylmuramate--L-alanine ligase</fullName>
        <ecNumber evidence="1">6.3.2.8</ecNumber>
    </recommendedName>
    <alternativeName>
        <fullName evidence="1">UDP-N-acetylmuramoyl-L-alanine synthetase</fullName>
    </alternativeName>
</protein>
<keyword id="KW-0067">ATP-binding</keyword>
<keyword id="KW-0131">Cell cycle</keyword>
<keyword id="KW-0132">Cell division</keyword>
<keyword id="KW-0133">Cell shape</keyword>
<keyword id="KW-0961">Cell wall biogenesis/degradation</keyword>
<keyword id="KW-0963">Cytoplasm</keyword>
<keyword id="KW-0436">Ligase</keyword>
<keyword id="KW-0547">Nucleotide-binding</keyword>
<keyword id="KW-0573">Peptidoglycan synthesis</keyword>
<organism>
    <name type="scientific">Streptococcus thermophilus (strain ATCC BAA-491 / LMD-9)</name>
    <dbReference type="NCBI Taxonomy" id="322159"/>
    <lineage>
        <taxon>Bacteria</taxon>
        <taxon>Bacillati</taxon>
        <taxon>Bacillota</taxon>
        <taxon>Bacilli</taxon>
        <taxon>Lactobacillales</taxon>
        <taxon>Streptococcaceae</taxon>
        <taxon>Streptococcus</taxon>
    </lineage>
</organism>
<proteinExistence type="inferred from homology"/>